<accession>B1YJ30</accession>
<dbReference type="EC" id="3.5.99.6" evidence="1"/>
<dbReference type="EMBL" id="CP001022">
    <property type="protein sequence ID" value="ACB59960.1"/>
    <property type="molecule type" value="Genomic_DNA"/>
</dbReference>
<dbReference type="RefSeq" id="WP_012369384.1">
    <property type="nucleotide sequence ID" value="NC_010556.1"/>
</dbReference>
<dbReference type="SMR" id="B1YJ30"/>
<dbReference type="STRING" id="262543.Exig_0478"/>
<dbReference type="KEGG" id="esi:Exig_0478"/>
<dbReference type="eggNOG" id="COG0363">
    <property type="taxonomic scope" value="Bacteria"/>
</dbReference>
<dbReference type="HOGENOM" id="CLU_049611_1_1_9"/>
<dbReference type="OrthoDB" id="9791139at2"/>
<dbReference type="UniPathway" id="UPA00629">
    <property type="reaction ID" value="UER00684"/>
</dbReference>
<dbReference type="Proteomes" id="UP000001681">
    <property type="component" value="Chromosome"/>
</dbReference>
<dbReference type="GO" id="GO:0005737">
    <property type="term" value="C:cytoplasm"/>
    <property type="evidence" value="ECO:0007669"/>
    <property type="project" value="TreeGrafter"/>
</dbReference>
<dbReference type="GO" id="GO:0004342">
    <property type="term" value="F:glucosamine-6-phosphate deaminase activity"/>
    <property type="evidence" value="ECO:0007669"/>
    <property type="project" value="UniProtKB-UniRule"/>
</dbReference>
<dbReference type="GO" id="GO:0042802">
    <property type="term" value="F:identical protein binding"/>
    <property type="evidence" value="ECO:0007669"/>
    <property type="project" value="TreeGrafter"/>
</dbReference>
<dbReference type="GO" id="GO:0005975">
    <property type="term" value="P:carbohydrate metabolic process"/>
    <property type="evidence" value="ECO:0007669"/>
    <property type="project" value="InterPro"/>
</dbReference>
<dbReference type="GO" id="GO:0006043">
    <property type="term" value="P:glucosamine catabolic process"/>
    <property type="evidence" value="ECO:0007669"/>
    <property type="project" value="TreeGrafter"/>
</dbReference>
<dbReference type="GO" id="GO:0006046">
    <property type="term" value="P:N-acetylglucosamine catabolic process"/>
    <property type="evidence" value="ECO:0007669"/>
    <property type="project" value="TreeGrafter"/>
</dbReference>
<dbReference type="GO" id="GO:0019262">
    <property type="term" value="P:N-acetylneuraminate catabolic process"/>
    <property type="evidence" value="ECO:0007669"/>
    <property type="project" value="UniProtKB-UniRule"/>
</dbReference>
<dbReference type="CDD" id="cd01399">
    <property type="entry name" value="GlcN6P_deaminase"/>
    <property type="match status" value="1"/>
</dbReference>
<dbReference type="FunFam" id="3.40.50.1360:FF:000003">
    <property type="entry name" value="Glucosamine-6-phosphate deaminase"/>
    <property type="match status" value="1"/>
</dbReference>
<dbReference type="Gene3D" id="3.40.50.1360">
    <property type="match status" value="1"/>
</dbReference>
<dbReference type="HAMAP" id="MF_01241">
    <property type="entry name" value="GlcN6P_deamin"/>
    <property type="match status" value="1"/>
</dbReference>
<dbReference type="InterPro" id="IPR006148">
    <property type="entry name" value="Glc/Gal-6P_isomerase"/>
</dbReference>
<dbReference type="InterPro" id="IPR004547">
    <property type="entry name" value="Glucosamine6P_isomerase"/>
</dbReference>
<dbReference type="InterPro" id="IPR018321">
    <property type="entry name" value="Glucosamine6P_isomerase_CS"/>
</dbReference>
<dbReference type="InterPro" id="IPR037171">
    <property type="entry name" value="NagB/RpiA_transferase-like"/>
</dbReference>
<dbReference type="NCBIfam" id="TIGR00502">
    <property type="entry name" value="nagB"/>
    <property type="match status" value="1"/>
</dbReference>
<dbReference type="PANTHER" id="PTHR11280">
    <property type="entry name" value="GLUCOSAMINE-6-PHOSPHATE ISOMERASE"/>
    <property type="match status" value="1"/>
</dbReference>
<dbReference type="PANTHER" id="PTHR11280:SF5">
    <property type="entry name" value="GLUCOSAMINE-6-PHOSPHATE ISOMERASE"/>
    <property type="match status" value="1"/>
</dbReference>
<dbReference type="Pfam" id="PF01182">
    <property type="entry name" value="Glucosamine_iso"/>
    <property type="match status" value="1"/>
</dbReference>
<dbReference type="SUPFAM" id="SSF100950">
    <property type="entry name" value="NagB/RpiA/CoA transferase-like"/>
    <property type="match status" value="1"/>
</dbReference>
<dbReference type="PROSITE" id="PS01161">
    <property type="entry name" value="GLC_GALNAC_ISOMERASE"/>
    <property type="match status" value="1"/>
</dbReference>
<gene>
    <name evidence="1" type="primary">nagB</name>
    <name type="ordered locus">Exig_0478</name>
</gene>
<proteinExistence type="inferred from homology"/>
<comment type="function">
    <text evidence="1">Catalyzes the reversible isomerization-deamination of glucosamine 6-phosphate (GlcN6P) to form fructose 6-phosphate (Fru6P) and ammonium ion.</text>
</comment>
<comment type="catalytic activity">
    <reaction evidence="1">
        <text>alpha-D-glucosamine 6-phosphate + H2O = beta-D-fructose 6-phosphate + NH4(+)</text>
        <dbReference type="Rhea" id="RHEA:12172"/>
        <dbReference type="ChEBI" id="CHEBI:15377"/>
        <dbReference type="ChEBI" id="CHEBI:28938"/>
        <dbReference type="ChEBI" id="CHEBI:57634"/>
        <dbReference type="ChEBI" id="CHEBI:75989"/>
        <dbReference type="EC" id="3.5.99.6"/>
    </reaction>
</comment>
<comment type="pathway">
    <text evidence="1">Amino-sugar metabolism; N-acetylneuraminate degradation; D-fructose 6-phosphate from N-acetylneuraminate: step 5/5.</text>
</comment>
<comment type="similarity">
    <text evidence="1">Belongs to the glucosamine/galactosamine-6-phosphate isomerase family. NagB subfamily.</text>
</comment>
<feature type="chain" id="PRO_1000139778" description="Glucosamine-6-phosphate deaminase">
    <location>
        <begin position="1"/>
        <end position="252"/>
    </location>
</feature>
<feature type="active site" description="Proton acceptor; for enolization step" evidence="1">
    <location>
        <position position="64"/>
    </location>
</feature>
<feature type="active site" description="For ring-opening step" evidence="1">
    <location>
        <position position="130"/>
    </location>
</feature>
<feature type="active site" description="Proton acceptor; for ring-opening step" evidence="1">
    <location>
        <position position="132"/>
    </location>
</feature>
<feature type="active site" description="For ring-opening step" evidence="1">
    <location>
        <position position="137"/>
    </location>
</feature>
<protein>
    <recommendedName>
        <fullName evidence="1">Glucosamine-6-phosphate deaminase</fullName>
        <ecNumber evidence="1">3.5.99.6</ecNumber>
    </recommendedName>
    <alternativeName>
        <fullName evidence="1">GlcN6P deaminase</fullName>
        <shortName evidence="1">GNPDA</shortName>
    </alternativeName>
    <alternativeName>
        <fullName evidence="1">Glucosamine-6-phosphate isomerase</fullName>
    </alternativeName>
</protein>
<organism>
    <name type="scientific">Exiguobacterium sibiricum (strain DSM 17290 / CCUG 55495 / CIP 109462 / JCM 13490 / 255-15)</name>
    <dbReference type="NCBI Taxonomy" id="262543"/>
    <lineage>
        <taxon>Bacteria</taxon>
        <taxon>Bacillati</taxon>
        <taxon>Bacillota</taxon>
        <taxon>Bacilli</taxon>
        <taxon>Bacillales</taxon>
        <taxon>Bacillales Family XII. Incertae Sedis</taxon>
        <taxon>Exiguobacterium</taxon>
    </lineage>
</organism>
<reference key="1">
    <citation type="submission" date="2008-04" db="EMBL/GenBank/DDBJ databases">
        <title>Complete sequence of chromosome of Exiguobacterium sibiricum 255-15.</title>
        <authorList>
            <consortium name="US DOE Joint Genome Institute"/>
            <person name="Copeland A."/>
            <person name="Lucas S."/>
            <person name="Lapidus A."/>
            <person name="Glavina del Rio T."/>
            <person name="Dalin E."/>
            <person name="Tice H."/>
            <person name="Bruce D."/>
            <person name="Goodwin L."/>
            <person name="Pitluck S."/>
            <person name="Kiss H."/>
            <person name="Chertkov O."/>
            <person name="Monk C."/>
            <person name="Brettin T."/>
            <person name="Detter J.C."/>
            <person name="Han C."/>
            <person name="Kuske C.R."/>
            <person name="Schmutz J."/>
            <person name="Larimer F."/>
            <person name="Land M."/>
            <person name="Hauser L."/>
            <person name="Kyrpides N."/>
            <person name="Mikhailova N."/>
            <person name="Vishnivetskaya T."/>
            <person name="Rodrigues D.F."/>
            <person name="Gilichinsky D."/>
            <person name="Tiedje J."/>
            <person name="Richardson P."/>
        </authorList>
    </citation>
    <scope>NUCLEOTIDE SEQUENCE [LARGE SCALE GENOMIC DNA]</scope>
    <source>
        <strain>DSM 17290 / CCUG 55495 / CIP 109462 / JCM 13490 / 255-15</strain>
    </source>
</reference>
<sequence length="252" mass="28251">MKWMIVEKAEELANVSYQLLKQEIVRHPEGLTIGLATGSSPLGVYEEWRKDRVDCRHVTTVNLDEYVGLSPDHPHSYHTFMQEHLFDAVDFKESYVPIGSTADPREESDRYEALVRQLGIDIQLLGIGSNGHIAFNEPGTPFDAKTHVTKLTESTRQANQRFFDRLEDVPTEAITMGIGTIMEAKKILLVASSERKAEAIRDMMEGPATTDCPATILQRHADVMVVLDEEAASLLSDEAKRTGRAAYTNFMK</sequence>
<evidence type="ECO:0000255" key="1">
    <source>
        <dbReference type="HAMAP-Rule" id="MF_01241"/>
    </source>
</evidence>
<name>NAGB_EXIS2</name>
<keyword id="KW-0119">Carbohydrate metabolism</keyword>
<keyword id="KW-0378">Hydrolase</keyword>
<keyword id="KW-1185">Reference proteome</keyword>